<gene>
    <name evidence="1" type="primary">hisC</name>
    <name type="ordered locus">GTNG_2132</name>
</gene>
<reference key="1">
    <citation type="journal article" date="2007" name="Proc. Natl. Acad. Sci. U.S.A.">
        <title>Genome and proteome of long-chain alkane degrading Geobacillus thermodenitrificans NG80-2 isolated from a deep-subsurface oil reservoir.</title>
        <authorList>
            <person name="Feng L."/>
            <person name="Wang W."/>
            <person name="Cheng J."/>
            <person name="Ren Y."/>
            <person name="Zhao G."/>
            <person name="Gao C."/>
            <person name="Tang Y."/>
            <person name="Liu X."/>
            <person name="Han W."/>
            <person name="Peng X."/>
            <person name="Liu R."/>
            <person name="Wang L."/>
        </authorList>
    </citation>
    <scope>NUCLEOTIDE SEQUENCE [LARGE SCALE GENOMIC DNA]</scope>
    <source>
        <strain>NG80-2</strain>
    </source>
</reference>
<evidence type="ECO:0000255" key="1">
    <source>
        <dbReference type="HAMAP-Rule" id="MF_01023"/>
    </source>
</evidence>
<comment type="catalytic activity">
    <reaction evidence="1">
        <text>L-histidinol phosphate + 2-oxoglutarate = 3-(imidazol-4-yl)-2-oxopropyl phosphate + L-glutamate</text>
        <dbReference type="Rhea" id="RHEA:23744"/>
        <dbReference type="ChEBI" id="CHEBI:16810"/>
        <dbReference type="ChEBI" id="CHEBI:29985"/>
        <dbReference type="ChEBI" id="CHEBI:57766"/>
        <dbReference type="ChEBI" id="CHEBI:57980"/>
        <dbReference type="EC" id="2.6.1.9"/>
    </reaction>
</comment>
<comment type="cofactor">
    <cofactor evidence="1">
        <name>pyridoxal 5'-phosphate</name>
        <dbReference type="ChEBI" id="CHEBI:597326"/>
    </cofactor>
</comment>
<comment type="pathway">
    <text evidence="1">Amino-acid biosynthesis; L-histidine biosynthesis; L-histidine from 5-phospho-alpha-D-ribose 1-diphosphate: step 7/9.</text>
</comment>
<comment type="subunit">
    <text evidence="1">Homodimer.</text>
</comment>
<comment type="similarity">
    <text evidence="1">Belongs to the class-II pyridoxal-phosphate-dependent aminotransferase family. Histidinol-phosphate aminotransferase subfamily.</text>
</comment>
<accession>A4IQ80</accession>
<feature type="chain" id="PRO_1000063478" description="Histidinol-phosphate aminotransferase">
    <location>
        <begin position="1"/>
        <end position="365"/>
    </location>
</feature>
<feature type="modified residue" description="N6-(pyridoxal phosphate)lysine" evidence="1">
    <location>
        <position position="222"/>
    </location>
</feature>
<organism>
    <name type="scientific">Geobacillus thermodenitrificans (strain NG80-2)</name>
    <dbReference type="NCBI Taxonomy" id="420246"/>
    <lineage>
        <taxon>Bacteria</taxon>
        <taxon>Bacillati</taxon>
        <taxon>Bacillota</taxon>
        <taxon>Bacilli</taxon>
        <taxon>Bacillales</taxon>
        <taxon>Anoxybacillaceae</taxon>
        <taxon>Geobacillus</taxon>
    </lineage>
</organism>
<keyword id="KW-0028">Amino-acid biosynthesis</keyword>
<keyword id="KW-0032">Aminotransferase</keyword>
<keyword id="KW-0368">Histidine biosynthesis</keyword>
<keyword id="KW-0663">Pyridoxal phosphate</keyword>
<keyword id="KW-0808">Transferase</keyword>
<protein>
    <recommendedName>
        <fullName evidence="1">Histidinol-phosphate aminotransferase</fullName>
        <ecNumber evidence="1">2.6.1.9</ecNumber>
    </recommendedName>
    <alternativeName>
        <fullName evidence="1">Imidazole acetol-phosphate transaminase</fullName>
    </alternativeName>
</protein>
<sequence>MQVKEQLRGLPPYQPGKSIEEVKQEYGLSEIIKLASNENPYGSSPTVKSAIAAELDRLAVYPDGYARALREKVANHLGVKETQLLFGNGSDEVVQIFCRAFLEPGTNTVMATPTFPQYRHNAIIERAEVREVPLVDGRHDLEAMLKEIDENTRIVWVCNPNNPTGTYVNETELRAFLDRVPSHVLVVLDEAYYEYVTADDYPQTVPLLQEYEQLVIMRTFSKAYGLAALRVGYGIASESLIRAVEPAREPFNTSTIAQAAAAVALDDQAFIRACVEQNRAELERYYRFCEEHGLKYYPSQTNFLFIDFGMDGNEVFQYLLERGIIVRSGKALGLPTGVRITVGTKEQNDRVFETISHMLREKQLT</sequence>
<name>HIS8_GEOTN</name>
<proteinExistence type="inferred from homology"/>
<dbReference type="EC" id="2.6.1.9" evidence="1"/>
<dbReference type="EMBL" id="CP000557">
    <property type="protein sequence ID" value="ABO67484.1"/>
    <property type="molecule type" value="Genomic_DNA"/>
</dbReference>
<dbReference type="RefSeq" id="WP_008879606.1">
    <property type="nucleotide sequence ID" value="NC_009328.1"/>
</dbReference>
<dbReference type="SMR" id="A4IQ80"/>
<dbReference type="KEGG" id="gtn:GTNG_2132"/>
<dbReference type="eggNOG" id="COG0079">
    <property type="taxonomic scope" value="Bacteria"/>
</dbReference>
<dbReference type="HOGENOM" id="CLU_017584_3_3_9"/>
<dbReference type="UniPathway" id="UPA00031">
    <property type="reaction ID" value="UER00012"/>
</dbReference>
<dbReference type="Proteomes" id="UP000001578">
    <property type="component" value="Chromosome"/>
</dbReference>
<dbReference type="GO" id="GO:0004400">
    <property type="term" value="F:histidinol-phosphate transaminase activity"/>
    <property type="evidence" value="ECO:0007669"/>
    <property type="project" value="UniProtKB-UniRule"/>
</dbReference>
<dbReference type="GO" id="GO:0030170">
    <property type="term" value="F:pyridoxal phosphate binding"/>
    <property type="evidence" value="ECO:0007669"/>
    <property type="project" value="InterPro"/>
</dbReference>
<dbReference type="GO" id="GO:0000105">
    <property type="term" value="P:L-histidine biosynthetic process"/>
    <property type="evidence" value="ECO:0007669"/>
    <property type="project" value="UniProtKB-UniRule"/>
</dbReference>
<dbReference type="CDD" id="cd00609">
    <property type="entry name" value="AAT_like"/>
    <property type="match status" value="1"/>
</dbReference>
<dbReference type="Gene3D" id="3.90.1150.10">
    <property type="entry name" value="Aspartate Aminotransferase, domain 1"/>
    <property type="match status" value="1"/>
</dbReference>
<dbReference type="Gene3D" id="3.40.640.10">
    <property type="entry name" value="Type I PLP-dependent aspartate aminotransferase-like (Major domain)"/>
    <property type="match status" value="1"/>
</dbReference>
<dbReference type="HAMAP" id="MF_01023">
    <property type="entry name" value="HisC_aminotrans_2"/>
    <property type="match status" value="1"/>
</dbReference>
<dbReference type="InterPro" id="IPR001917">
    <property type="entry name" value="Aminotrans_II_pyridoxalP_BS"/>
</dbReference>
<dbReference type="InterPro" id="IPR004839">
    <property type="entry name" value="Aminotransferase_I/II_large"/>
</dbReference>
<dbReference type="InterPro" id="IPR005861">
    <property type="entry name" value="HisP_aminotrans"/>
</dbReference>
<dbReference type="InterPro" id="IPR050106">
    <property type="entry name" value="HistidinolP_aminotransfase"/>
</dbReference>
<dbReference type="InterPro" id="IPR015424">
    <property type="entry name" value="PyrdxlP-dep_Trfase"/>
</dbReference>
<dbReference type="InterPro" id="IPR015421">
    <property type="entry name" value="PyrdxlP-dep_Trfase_major"/>
</dbReference>
<dbReference type="InterPro" id="IPR015422">
    <property type="entry name" value="PyrdxlP-dep_Trfase_small"/>
</dbReference>
<dbReference type="NCBIfam" id="TIGR01141">
    <property type="entry name" value="hisC"/>
    <property type="match status" value="1"/>
</dbReference>
<dbReference type="PANTHER" id="PTHR43643:SF3">
    <property type="entry name" value="HISTIDINOL-PHOSPHATE AMINOTRANSFERASE"/>
    <property type="match status" value="1"/>
</dbReference>
<dbReference type="PANTHER" id="PTHR43643">
    <property type="entry name" value="HISTIDINOL-PHOSPHATE AMINOTRANSFERASE 2"/>
    <property type="match status" value="1"/>
</dbReference>
<dbReference type="Pfam" id="PF00155">
    <property type="entry name" value="Aminotran_1_2"/>
    <property type="match status" value="1"/>
</dbReference>
<dbReference type="SUPFAM" id="SSF53383">
    <property type="entry name" value="PLP-dependent transferases"/>
    <property type="match status" value="1"/>
</dbReference>
<dbReference type="PROSITE" id="PS00599">
    <property type="entry name" value="AA_TRANSFER_CLASS_2"/>
    <property type="match status" value="1"/>
</dbReference>